<evidence type="ECO:0000250" key="1"/>
<evidence type="ECO:0000255" key="2">
    <source>
        <dbReference type="HAMAP-Rule" id="MF_00118"/>
    </source>
</evidence>
<name>EFTU_MICLC</name>
<keyword id="KW-0963">Cytoplasm</keyword>
<keyword id="KW-0251">Elongation factor</keyword>
<keyword id="KW-0342">GTP-binding</keyword>
<keyword id="KW-0378">Hydrolase</keyword>
<keyword id="KW-0460">Magnesium</keyword>
<keyword id="KW-0479">Metal-binding</keyword>
<keyword id="KW-0547">Nucleotide-binding</keyword>
<keyword id="KW-0648">Protein biosynthesis</keyword>
<keyword id="KW-1185">Reference proteome</keyword>
<sequence>MAKAKFERTKPHVNIGTIGHVDHGKTTLTAAISKVLYDKYPDLNEARDFATIDSAPEERQRGITINISHVEYQTEKRHYAHVDAPGHADYIKNMITGAAQMDGAILVVAATDGPMAQTREHVLLARQVGVPALLVALNKSDMVEDEELLELVEMEVRELLSSQEFDGDEAPVIRTSGLKALEGDPQWVKSVEDLMDAVDEYIPDPVRDKDKPFLMPIEDVFTITGRGTVVTGRAERGTLKINSEVEIVGIRDVQKTTVTGIEMFHKQLDEAWAGENCGLLLRGLKRDDVERGQVVVEPGSITPHTNFEANVYILSKDEGGRHNPFYSNYRPQFYFRTTDVTGVITLPEGTEMVMPGDTTEMSVELIQPIAMEEGLGFAIREGGRTVGSGRVTKITK</sequence>
<organism>
    <name type="scientific">Micrococcus luteus (strain ATCC 4698 / DSM 20030 / JCM 1464 / CCM 169 / CCUG 5858 / IAM 1056 / NBRC 3333 / NCIMB 9278 / NCTC 2665 / VKM Ac-2230)</name>
    <name type="common">Micrococcus lysodeikticus</name>
    <dbReference type="NCBI Taxonomy" id="465515"/>
    <lineage>
        <taxon>Bacteria</taxon>
        <taxon>Bacillati</taxon>
        <taxon>Actinomycetota</taxon>
        <taxon>Actinomycetes</taxon>
        <taxon>Micrococcales</taxon>
        <taxon>Micrococcaceae</taxon>
        <taxon>Micrococcus</taxon>
    </lineage>
</organism>
<gene>
    <name evidence="2" type="primary">tuf</name>
    <name type="ordered locus">Mlut_17200</name>
</gene>
<accession>C5CC66</accession>
<comment type="function">
    <text evidence="2">GTP hydrolase that promotes the GTP-dependent binding of aminoacyl-tRNA to the A-site of ribosomes during protein biosynthesis.</text>
</comment>
<comment type="catalytic activity">
    <reaction evidence="2">
        <text>GTP + H2O = GDP + phosphate + H(+)</text>
        <dbReference type="Rhea" id="RHEA:19669"/>
        <dbReference type="ChEBI" id="CHEBI:15377"/>
        <dbReference type="ChEBI" id="CHEBI:15378"/>
        <dbReference type="ChEBI" id="CHEBI:37565"/>
        <dbReference type="ChEBI" id="CHEBI:43474"/>
        <dbReference type="ChEBI" id="CHEBI:58189"/>
        <dbReference type="EC" id="3.6.5.3"/>
    </reaction>
    <physiologicalReaction direction="left-to-right" evidence="2">
        <dbReference type="Rhea" id="RHEA:19670"/>
    </physiologicalReaction>
</comment>
<comment type="subunit">
    <text evidence="2">Monomer.</text>
</comment>
<comment type="subcellular location">
    <subcellularLocation>
        <location evidence="2">Cytoplasm</location>
    </subcellularLocation>
</comment>
<comment type="similarity">
    <text evidence="2">Belongs to the TRAFAC class translation factor GTPase superfamily. Classic translation factor GTPase family. EF-Tu/EF-1A subfamily.</text>
</comment>
<proteinExistence type="inferred from homology"/>
<reference key="1">
    <citation type="journal article" date="2010" name="J. Bacteriol.">
        <title>Genome sequence of the Fleming strain of Micrococcus luteus, a simple free-living actinobacterium.</title>
        <authorList>
            <person name="Young M."/>
            <person name="Artsatbanov V."/>
            <person name="Beller H.R."/>
            <person name="Chandra G."/>
            <person name="Chater K.F."/>
            <person name="Dover L.G."/>
            <person name="Goh E.B."/>
            <person name="Kahan T."/>
            <person name="Kaprelyants A.S."/>
            <person name="Kyrpides N."/>
            <person name="Lapidus A."/>
            <person name="Lowry S.R."/>
            <person name="Lykidis A."/>
            <person name="Mahillon J."/>
            <person name="Markowitz V."/>
            <person name="Mavromatis K."/>
            <person name="Mukamolova G.V."/>
            <person name="Oren A."/>
            <person name="Rokem J.S."/>
            <person name="Smith M.C."/>
            <person name="Young D.I."/>
            <person name="Greenblatt C.L."/>
        </authorList>
    </citation>
    <scope>NUCLEOTIDE SEQUENCE [LARGE SCALE GENOMIC DNA]</scope>
    <source>
        <strain>ATCC 4698 / DSM 20030 / JCM 1464 / CCM 169 / CCUG 5858 / IAM 1056 / NBRC 3333 / NCIMB 9278 / NCTC 2665 / VKM Ac-2230</strain>
    </source>
</reference>
<dbReference type="EC" id="3.6.5.3" evidence="2"/>
<dbReference type="EMBL" id="CP001628">
    <property type="protein sequence ID" value="ACS31207.1"/>
    <property type="molecule type" value="Genomic_DNA"/>
</dbReference>
<dbReference type="RefSeq" id="WP_010080381.1">
    <property type="nucleotide sequence ID" value="NC_012803.1"/>
</dbReference>
<dbReference type="SMR" id="C5CC66"/>
<dbReference type="STRING" id="465515.Mlut_17200"/>
<dbReference type="EnsemblBacteria" id="ACS31207">
    <property type="protein sequence ID" value="ACS31207"/>
    <property type="gene ID" value="Mlut_17200"/>
</dbReference>
<dbReference type="GeneID" id="93343586"/>
<dbReference type="KEGG" id="mlu:Mlut_17200"/>
<dbReference type="PATRIC" id="fig|465515.4.peg.1659"/>
<dbReference type="eggNOG" id="COG0050">
    <property type="taxonomic scope" value="Bacteria"/>
</dbReference>
<dbReference type="HOGENOM" id="CLU_007265_0_1_11"/>
<dbReference type="Proteomes" id="UP000000738">
    <property type="component" value="Chromosome"/>
</dbReference>
<dbReference type="GO" id="GO:0005829">
    <property type="term" value="C:cytosol"/>
    <property type="evidence" value="ECO:0007669"/>
    <property type="project" value="TreeGrafter"/>
</dbReference>
<dbReference type="GO" id="GO:0005525">
    <property type="term" value="F:GTP binding"/>
    <property type="evidence" value="ECO:0007669"/>
    <property type="project" value="UniProtKB-UniRule"/>
</dbReference>
<dbReference type="GO" id="GO:0003924">
    <property type="term" value="F:GTPase activity"/>
    <property type="evidence" value="ECO:0007669"/>
    <property type="project" value="InterPro"/>
</dbReference>
<dbReference type="GO" id="GO:0003746">
    <property type="term" value="F:translation elongation factor activity"/>
    <property type="evidence" value="ECO:0007669"/>
    <property type="project" value="UniProtKB-UniRule"/>
</dbReference>
<dbReference type="CDD" id="cd01884">
    <property type="entry name" value="EF_Tu"/>
    <property type="match status" value="1"/>
</dbReference>
<dbReference type="CDD" id="cd03697">
    <property type="entry name" value="EFTU_II"/>
    <property type="match status" value="1"/>
</dbReference>
<dbReference type="CDD" id="cd03707">
    <property type="entry name" value="EFTU_III"/>
    <property type="match status" value="1"/>
</dbReference>
<dbReference type="FunFam" id="2.40.30.10:FF:000001">
    <property type="entry name" value="Elongation factor Tu"/>
    <property type="match status" value="1"/>
</dbReference>
<dbReference type="FunFam" id="3.40.50.300:FF:000003">
    <property type="entry name" value="Elongation factor Tu"/>
    <property type="match status" value="1"/>
</dbReference>
<dbReference type="Gene3D" id="3.40.50.300">
    <property type="entry name" value="P-loop containing nucleotide triphosphate hydrolases"/>
    <property type="match status" value="1"/>
</dbReference>
<dbReference type="Gene3D" id="2.40.30.10">
    <property type="entry name" value="Translation factors"/>
    <property type="match status" value="2"/>
</dbReference>
<dbReference type="HAMAP" id="MF_00118_B">
    <property type="entry name" value="EF_Tu_B"/>
    <property type="match status" value="1"/>
</dbReference>
<dbReference type="InterPro" id="IPR041709">
    <property type="entry name" value="EF-Tu_GTP-bd"/>
</dbReference>
<dbReference type="InterPro" id="IPR050055">
    <property type="entry name" value="EF-Tu_GTPase"/>
</dbReference>
<dbReference type="InterPro" id="IPR004161">
    <property type="entry name" value="EFTu-like_2"/>
</dbReference>
<dbReference type="InterPro" id="IPR033720">
    <property type="entry name" value="EFTU_2"/>
</dbReference>
<dbReference type="InterPro" id="IPR031157">
    <property type="entry name" value="G_TR_CS"/>
</dbReference>
<dbReference type="InterPro" id="IPR027417">
    <property type="entry name" value="P-loop_NTPase"/>
</dbReference>
<dbReference type="InterPro" id="IPR005225">
    <property type="entry name" value="Small_GTP-bd"/>
</dbReference>
<dbReference type="InterPro" id="IPR000795">
    <property type="entry name" value="T_Tr_GTP-bd_dom"/>
</dbReference>
<dbReference type="InterPro" id="IPR009000">
    <property type="entry name" value="Transl_B-barrel_sf"/>
</dbReference>
<dbReference type="InterPro" id="IPR009001">
    <property type="entry name" value="Transl_elong_EF1A/Init_IF2_C"/>
</dbReference>
<dbReference type="InterPro" id="IPR004541">
    <property type="entry name" value="Transl_elong_EFTu/EF1A_bac/org"/>
</dbReference>
<dbReference type="InterPro" id="IPR004160">
    <property type="entry name" value="Transl_elong_EFTu/EF1A_C"/>
</dbReference>
<dbReference type="NCBIfam" id="TIGR00485">
    <property type="entry name" value="EF-Tu"/>
    <property type="match status" value="1"/>
</dbReference>
<dbReference type="NCBIfam" id="NF000766">
    <property type="entry name" value="PRK00049.1"/>
    <property type="match status" value="1"/>
</dbReference>
<dbReference type="NCBIfam" id="NF009372">
    <property type="entry name" value="PRK12735.1"/>
    <property type="match status" value="1"/>
</dbReference>
<dbReference type="NCBIfam" id="NF009373">
    <property type="entry name" value="PRK12736.1"/>
    <property type="match status" value="1"/>
</dbReference>
<dbReference type="NCBIfam" id="TIGR00231">
    <property type="entry name" value="small_GTP"/>
    <property type="match status" value="1"/>
</dbReference>
<dbReference type="PANTHER" id="PTHR43721:SF22">
    <property type="entry name" value="ELONGATION FACTOR TU, MITOCHONDRIAL"/>
    <property type="match status" value="1"/>
</dbReference>
<dbReference type="PANTHER" id="PTHR43721">
    <property type="entry name" value="ELONGATION FACTOR TU-RELATED"/>
    <property type="match status" value="1"/>
</dbReference>
<dbReference type="Pfam" id="PF00009">
    <property type="entry name" value="GTP_EFTU"/>
    <property type="match status" value="1"/>
</dbReference>
<dbReference type="Pfam" id="PF03144">
    <property type="entry name" value="GTP_EFTU_D2"/>
    <property type="match status" value="1"/>
</dbReference>
<dbReference type="Pfam" id="PF03143">
    <property type="entry name" value="GTP_EFTU_D3"/>
    <property type="match status" value="1"/>
</dbReference>
<dbReference type="PRINTS" id="PR00315">
    <property type="entry name" value="ELONGATNFCT"/>
</dbReference>
<dbReference type="SUPFAM" id="SSF50465">
    <property type="entry name" value="EF-Tu/eEF-1alpha/eIF2-gamma C-terminal domain"/>
    <property type="match status" value="1"/>
</dbReference>
<dbReference type="SUPFAM" id="SSF52540">
    <property type="entry name" value="P-loop containing nucleoside triphosphate hydrolases"/>
    <property type="match status" value="1"/>
</dbReference>
<dbReference type="SUPFAM" id="SSF50447">
    <property type="entry name" value="Translation proteins"/>
    <property type="match status" value="1"/>
</dbReference>
<dbReference type="PROSITE" id="PS00301">
    <property type="entry name" value="G_TR_1"/>
    <property type="match status" value="1"/>
</dbReference>
<dbReference type="PROSITE" id="PS51722">
    <property type="entry name" value="G_TR_2"/>
    <property type="match status" value="1"/>
</dbReference>
<feature type="chain" id="PRO_1000203016" description="Elongation factor Tu">
    <location>
        <begin position="1"/>
        <end position="396"/>
    </location>
</feature>
<feature type="domain" description="tr-type G">
    <location>
        <begin position="10"/>
        <end position="206"/>
    </location>
</feature>
<feature type="region of interest" description="G1" evidence="1">
    <location>
        <begin position="19"/>
        <end position="26"/>
    </location>
</feature>
<feature type="region of interest" description="G2" evidence="1">
    <location>
        <begin position="62"/>
        <end position="66"/>
    </location>
</feature>
<feature type="region of interest" description="G3" evidence="1">
    <location>
        <begin position="83"/>
        <end position="86"/>
    </location>
</feature>
<feature type="region of interest" description="G4" evidence="1">
    <location>
        <begin position="138"/>
        <end position="141"/>
    </location>
</feature>
<feature type="region of interest" description="G5" evidence="1">
    <location>
        <begin position="176"/>
        <end position="178"/>
    </location>
</feature>
<feature type="binding site" evidence="2">
    <location>
        <begin position="19"/>
        <end position="26"/>
    </location>
    <ligand>
        <name>GTP</name>
        <dbReference type="ChEBI" id="CHEBI:37565"/>
    </ligand>
</feature>
<feature type="binding site" evidence="2">
    <location>
        <position position="26"/>
    </location>
    <ligand>
        <name>Mg(2+)</name>
        <dbReference type="ChEBI" id="CHEBI:18420"/>
    </ligand>
</feature>
<feature type="binding site" evidence="2">
    <location>
        <begin position="83"/>
        <end position="87"/>
    </location>
    <ligand>
        <name>GTP</name>
        <dbReference type="ChEBI" id="CHEBI:37565"/>
    </ligand>
</feature>
<feature type="binding site" evidence="2">
    <location>
        <begin position="138"/>
        <end position="141"/>
    </location>
    <ligand>
        <name>GTP</name>
        <dbReference type="ChEBI" id="CHEBI:37565"/>
    </ligand>
</feature>
<protein>
    <recommendedName>
        <fullName evidence="2">Elongation factor Tu</fullName>
        <shortName evidence="2">EF-Tu</shortName>
        <ecNumber evidence="2">3.6.5.3</ecNumber>
    </recommendedName>
</protein>